<sequence length="90" mass="9919">MSKKTFEELFTELQHKAANGDPATSRTAELVDKGVHAIGKKVVEEAAEVWMAAEYEGKDAAAEEISQLLYHVQVMMVARGISLDDVYAHL</sequence>
<keyword id="KW-0002">3D-structure</keyword>
<keyword id="KW-0028">Amino-acid biosynthesis</keyword>
<keyword id="KW-0067">ATP-binding</keyword>
<keyword id="KW-0963">Cytoplasm</keyword>
<keyword id="KW-0368">Histidine biosynthesis</keyword>
<keyword id="KW-0378">Hydrolase</keyword>
<keyword id="KW-0547">Nucleotide-binding</keyword>
<keyword id="KW-1185">Reference proteome</keyword>
<gene>
    <name type="primary">hisE</name>
    <name type="ordered locus">SCO1439</name>
    <name type="ORF">SC6D7A.02c</name>
</gene>
<proteinExistence type="evidence at protein level"/>
<accession>Q9EWK0</accession>
<reference key="1">
    <citation type="journal article" date="2002" name="Nature">
        <title>Complete genome sequence of the model actinomycete Streptomyces coelicolor A3(2).</title>
        <authorList>
            <person name="Bentley S.D."/>
            <person name="Chater K.F."/>
            <person name="Cerdeno-Tarraga A.-M."/>
            <person name="Challis G.L."/>
            <person name="Thomson N.R."/>
            <person name="James K.D."/>
            <person name="Harris D.E."/>
            <person name="Quail M.A."/>
            <person name="Kieser H."/>
            <person name="Harper D."/>
            <person name="Bateman A."/>
            <person name="Brown S."/>
            <person name="Chandra G."/>
            <person name="Chen C.W."/>
            <person name="Collins M."/>
            <person name="Cronin A."/>
            <person name="Fraser A."/>
            <person name="Goble A."/>
            <person name="Hidalgo J."/>
            <person name="Hornsby T."/>
            <person name="Howarth S."/>
            <person name="Huang C.-H."/>
            <person name="Kieser T."/>
            <person name="Larke L."/>
            <person name="Murphy L.D."/>
            <person name="Oliver K."/>
            <person name="O'Neil S."/>
            <person name="Rabbinowitsch E."/>
            <person name="Rajandream M.A."/>
            <person name="Rutherford K.M."/>
            <person name="Rutter S."/>
            <person name="Seeger K."/>
            <person name="Saunders D."/>
            <person name="Sharp S."/>
            <person name="Squares R."/>
            <person name="Squares S."/>
            <person name="Taylor K."/>
            <person name="Warren T."/>
            <person name="Wietzorrek A."/>
            <person name="Woodward J.R."/>
            <person name="Barrell B.G."/>
            <person name="Parkhill J."/>
            <person name="Hopwood D.A."/>
        </authorList>
    </citation>
    <scope>NUCLEOTIDE SEQUENCE [LARGE SCALE GENOMIC DNA]</scope>
    <source>
        <strain>ATCC BAA-471 / A3(2) / M145</strain>
    </source>
</reference>
<evidence type="ECO:0000250" key="1"/>
<evidence type="ECO:0000305" key="2"/>
<evidence type="ECO:0007829" key="3">
    <source>
        <dbReference type="PDB" id="1YXB"/>
    </source>
</evidence>
<dbReference type="EC" id="3.6.1.31"/>
<dbReference type="EMBL" id="AL939108">
    <property type="protein sequence ID" value="CAC17557.1"/>
    <property type="molecule type" value="Genomic_DNA"/>
</dbReference>
<dbReference type="RefSeq" id="NP_625720.1">
    <property type="nucleotide sequence ID" value="NC_003888.3"/>
</dbReference>
<dbReference type="RefSeq" id="WP_011027788.1">
    <property type="nucleotide sequence ID" value="NZ_VNID01000029.1"/>
</dbReference>
<dbReference type="PDB" id="1YXB">
    <property type="method" value="X-ray"/>
    <property type="resolution" value="2.60 A"/>
    <property type="chains" value="A/B/C/D/E/F/G/H=1-90"/>
</dbReference>
<dbReference type="PDBsum" id="1YXB"/>
<dbReference type="SMR" id="Q9EWK0"/>
<dbReference type="FunCoup" id="Q9EWK0">
    <property type="interactions" value="108"/>
</dbReference>
<dbReference type="STRING" id="100226.gene:17759025"/>
<dbReference type="PaxDb" id="100226-SCO1439"/>
<dbReference type="KEGG" id="sco:SCO1439"/>
<dbReference type="PATRIC" id="fig|100226.15.peg.1449"/>
<dbReference type="eggNOG" id="COG0140">
    <property type="taxonomic scope" value="Bacteria"/>
</dbReference>
<dbReference type="HOGENOM" id="CLU_123337_2_1_11"/>
<dbReference type="InParanoid" id="Q9EWK0"/>
<dbReference type="OrthoDB" id="3212875at2"/>
<dbReference type="PhylomeDB" id="Q9EWK0"/>
<dbReference type="UniPathway" id="UPA00031">
    <property type="reaction ID" value="UER00007"/>
</dbReference>
<dbReference type="EvolutionaryTrace" id="Q9EWK0"/>
<dbReference type="Proteomes" id="UP000001973">
    <property type="component" value="Chromosome"/>
</dbReference>
<dbReference type="GO" id="GO:0005737">
    <property type="term" value="C:cytoplasm"/>
    <property type="evidence" value="ECO:0007669"/>
    <property type="project" value="UniProtKB-SubCell"/>
</dbReference>
<dbReference type="GO" id="GO:0005524">
    <property type="term" value="F:ATP binding"/>
    <property type="evidence" value="ECO:0007669"/>
    <property type="project" value="UniProtKB-KW"/>
</dbReference>
<dbReference type="GO" id="GO:0004636">
    <property type="term" value="F:phosphoribosyl-ATP diphosphatase activity"/>
    <property type="evidence" value="ECO:0007669"/>
    <property type="project" value="UniProtKB-UniRule"/>
</dbReference>
<dbReference type="GO" id="GO:0000105">
    <property type="term" value="P:L-histidine biosynthetic process"/>
    <property type="evidence" value="ECO:0007669"/>
    <property type="project" value="UniProtKB-UniRule"/>
</dbReference>
<dbReference type="CDD" id="cd11547">
    <property type="entry name" value="NTP-PPase_HisE"/>
    <property type="match status" value="1"/>
</dbReference>
<dbReference type="Gene3D" id="1.10.287.1080">
    <property type="entry name" value="MazG-like"/>
    <property type="match status" value="1"/>
</dbReference>
<dbReference type="HAMAP" id="MF_01020">
    <property type="entry name" value="HisE"/>
    <property type="match status" value="1"/>
</dbReference>
<dbReference type="InterPro" id="IPR008179">
    <property type="entry name" value="HisE"/>
</dbReference>
<dbReference type="InterPro" id="IPR021130">
    <property type="entry name" value="PRib-ATP_PPHydrolase-like"/>
</dbReference>
<dbReference type="NCBIfam" id="TIGR03188">
    <property type="entry name" value="histidine_hisI"/>
    <property type="match status" value="1"/>
</dbReference>
<dbReference type="NCBIfam" id="NF001610">
    <property type="entry name" value="PRK00400.1-1"/>
    <property type="match status" value="1"/>
</dbReference>
<dbReference type="PANTHER" id="PTHR42945">
    <property type="entry name" value="HISTIDINE BIOSYNTHESIS BIFUNCTIONAL PROTEIN"/>
    <property type="match status" value="1"/>
</dbReference>
<dbReference type="PANTHER" id="PTHR42945:SF1">
    <property type="entry name" value="HISTIDINE BIOSYNTHESIS BIFUNCTIONAL PROTEIN HIS7"/>
    <property type="match status" value="1"/>
</dbReference>
<dbReference type="Pfam" id="PF01503">
    <property type="entry name" value="PRA-PH"/>
    <property type="match status" value="1"/>
</dbReference>
<dbReference type="SUPFAM" id="SSF101386">
    <property type="entry name" value="all-alpha NTP pyrophosphatases"/>
    <property type="match status" value="1"/>
</dbReference>
<organism>
    <name type="scientific">Streptomyces coelicolor (strain ATCC BAA-471 / A3(2) / M145)</name>
    <dbReference type="NCBI Taxonomy" id="100226"/>
    <lineage>
        <taxon>Bacteria</taxon>
        <taxon>Bacillati</taxon>
        <taxon>Actinomycetota</taxon>
        <taxon>Actinomycetes</taxon>
        <taxon>Kitasatosporales</taxon>
        <taxon>Streptomycetaceae</taxon>
        <taxon>Streptomyces</taxon>
        <taxon>Streptomyces albidoflavus group</taxon>
    </lineage>
</organism>
<comment type="catalytic activity">
    <reaction>
        <text>1-(5-phospho-beta-D-ribosyl)-ATP + H2O = 1-(5-phospho-beta-D-ribosyl)-5'-AMP + diphosphate + H(+)</text>
        <dbReference type="Rhea" id="RHEA:22828"/>
        <dbReference type="ChEBI" id="CHEBI:15377"/>
        <dbReference type="ChEBI" id="CHEBI:15378"/>
        <dbReference type="ChEBI" id="CHEBI:33019"/>
        <dbReference type="ChEBI" id="CHEBI:59457"/>
        <dbReference type="ChEBI" id="CHEBI:73183"/>
        <dbReference type="EC" id="3.6.1.31"/>
    </reaction>
</comment>
<comment type="pathway">
    <text>Amino-acid biosynthesis; L-histidine biosynthesis; L-histidine from 5-phospho-alpha-D-ribose 1-diphosphate: step 2/9.</text>
</comment>
<comment type="subcellular location">
    <subcellularLocation>
        <location evidence="1">Cytoplasm</location>
    </subcellularLocation>
</comment>
<comment type="similarity">
    <text evidence="2">Belongs to the PRA-PH family.</text>
</comment>
<feature type="chain" id="PRO_0000136388" description="Phosphoribosyl-ATP pyrophosphatase">
    <location>
        <begin position="1"/>
        <end position="90"/>
    </location>
</feature>
<feature type="helix" evidence="3">
    <location>
        <begin position="6"/>
        <end position="16"/>
    </location>
</feature>
<feature type="helix" evidence="3">
    <location>
        <begin position="30"/>
        <end position="33"/>
    </location>
</feature>
<feature type="helix" evidence="3">
    <location>
        <begin position="35"/>
        <end position="55"/>
    </location>
</feature>
<feature type="helix" evidence="3">
    <location>
        <begin position="58"/>
        <end position="78"/>
    </location>
</feature>
<feature type="helix" evidence="3">
    <location>
        <begin position="83"/>
        <end position="89"/>
    </location>
</feature>
<name>HIS2_STRCO</name>
<protein>
    <recommendedName>
        <fullName>Phosphoribosyl-ATP pyrophosphatase</fullName>
        <shortName>PRA-PH</shortName>
        <ecNumber>3.6.1.31</ecNumber>
    </recommendedName>
</protein>